<evidence type="ECO:0000255" key="1">
    <source>
        <dbReference type="HAMAP-Rule" id="MF_01309"/>
    </source>
</evidence>
<evidence type="ECO:0000305" key="2"/>
<sequence>MGHKSNPIGLRLQINRTWDSRWYAEGRNYAQMLEEDLKIRKYIVENLPQAAISKVVIERPAKLCRVSIYAARPGVIIGKKGADIEKLRSKLATMTGSDVKLNIVEIRKPEIDSKLVAQGVADQLVRRVAFRRAMKRAVQSALRLGAEGIKITCGGRLGGAEIARVEWYREGRVPLHTLRANIDYAEAEAHTAYGVIGIKVWIFKGEILGHDPMAQDRLMMEAQTSGVRPAR</sequence>
<accession>Q2G8X4</accession>
<dbReference type="EMBL" id="CP000248">
    <property type="protein sequence ID" value="ABD25699.1"/>
    <property type="molecule type" value="Genomic_DNA"/>
</dbReference>
<dbReference type="RefSeq" id="WP_011444913.1">
    <property type="nucleotide sequence ID" value="NC_007794.1"/>
</dbReference>
<dbReference type="SMR" id="Q2G8X4"/>
<dbReference type="STRING" id="279238.Saro_1255"/>
<dbReference type="KEGG" id="nar:Saro_1255"/>
<dbReference type="eggNOG" id="COG0092">
    <property type="taxonomic scope" value="Bacteria"/>
</dbReference>
<dbReference type="HOGENOM" id="CLU_058591_0_2_5"/>
<dbReference type="Proteomes" id="UP000009134">
    <property type="component" value="Chromosome"/>
</dbReference>
<dbReference type="GO" id="GO:0022627">
    <property type="term" value="C:cytosolic small ribosomal subunit"/>
    <property type="evidence" value="ECO:0007669"/>
    <property type="project" value="TreeGrafter"/>
</dbReference>
<dbReference type="GO" id="GO:0003729">
    <property type="term" value="F:mRNA binding"/>
    <property type="evidence" value="ECO:0007669"/>
    <property type="project" value="UniProtKB-UniRule"/>
</dbReference>
<dbReference type="GO" id="GO:0019843">
    <property type="term" value="F:rRNA binding"/>
    <property type="evidence" value="ECO:0007669"/>
    <property type="project" value="UniProtKB-UniRule"/>
</dbReference>
<dbReference type="GO" id="GO:0003735">
    <property type="term" value="F:structural constituent of ribosome"/>
    <property type="evidence" value="ECO:0007669"/>
    <property type="project" value="InterPro"/>
</dbReference>
<dbReference type="GO" id="GO:0006412">
    <property type="term" value="P:translation"/>
    <property type="evidence" value="ECO:0007669"/>
    <property type="project" value="UniProtKB-UniRule"/>
</dbReference>
<dbReference type="CDD" id="cd02412">
    <property type="entry name" value="KH-II_30S_S3"/>
    <property type="match status" value="1"/>
</dbReference>
<dbReference type="FunFam" id="3.30.1140.32:FF:000002">
    <property type="entry name" value="30S ribosomal protein S3"/>
    <property type="match status" value="1"/>
</dbReference>
<dbReference type="FunFam" id="3.30.300.20:FF:000001">
    <property type="entry name" value="30S ribosomal protein S3"/>
    <property type="match status" value="1"/>
</dbReference>
<dbReference type="Gene3D" id="3.30.300.20">
    <property type="match status" value="1"/>
</dbReference>
<dbReference type="Gene3D" id="3.30.1140.32">
    <property type="entry name" value="Ribosomal protein S3, C-terminal domain"/>
    <property type="match status" value="1"/>
</dbReference>
<dbReference type="HAMAP" id="MF_01309_B">
    <property type="entry name" value="Ribosomal_uS3_B"/>
    <property type="match status" value="1"/>
</dbReference>
<dbReference type="InterPro" id="IPR004087">
    <property type="entry name" value="KH_dom"/>
</dbReference>
<dbReference type="InterPro" id="IPR015946">
    <property type="entry name" value="KH_dom-like_a/b"/>
</dbReference>
<dbReference type="InterPro" id="IPR004044">
    <property type="entry name" value="KH_dom_type_2"/>
</dbReference>
<dbReference type="InterPro" id="IPR009019">
    <property type="entry name" value="KH_sf_prok-type"/>
</dbReference>
<dbReference type="InterPro" id="IPR036419">
    <property type="entry name" value="Ribosomal_S3_C_sf"/>
</dbReference>
<dbReference type="InterPro" id="IPR005704">
    <property type="entry name" value="Ribosomal_uS3_bac-typ"/>
</dbReference>
<dbReference type="InterPro" id="IPR001351">
    <property type="entry name" value="Ribosomal_uS3_C"/>
</dbReference>
<dbReference type="InterPro" id="IPR018280">
    <property type="entry name" value="Ribosomal_uS3_CS"/>
</dbReference>
<dbReference type="NCBIfam" id="TIGR01009">
    <property type="entry name" value="rpsC_bact"/>
    <property type="match status" value="1"/>
</dbReference>
<dbReference type="PANTHER" id="PTHR11760">
    <property type="entry name" value="30S/40S RIBOSOMAL PROTEIN S3"/>
    <property type="match status" value="1"/>
</dbReference>
<dbReference type="PANTHER" id="PTHR11760:SF19">
    <property type="entry name" value="SMALL RIBOSOMAL SUBUNIT PROTEIN US3C"/>
    <property type="match status" value="1"/>
</dbReference>
<dbReference type="Pfam" id="PF07650">
    <property type="entry name" value="KH_2"/>
    <property type="match status" value="1"/>
</dbReference>
<dbReference type="Pfam" id="PF00189">
    <property type="entry name" value="Ribosomal_S3_C"/>
    <property type="match status" value="1"/>
</dbReference>
<dbReference type="SMART" id="SM00322">
    <property type="entry name" value="KH"/>
    <property type="match status" value="1"/>
</dbReference>
<dbReference type="SUPFAM" id="SSF54814">
    <property type="entry name" value="Prokaryotic type KH domain (KH-domain type II)"/>
    <property type="match status" value="1"/>
</dbReference>
<dbReference type="SUPFAM" id="SSF54821">
    <property type="entry name" value="Ribosomal protein S3 C-terminal domain"/>
    <property type="match status" value="1"/>
</dbReference>
<dbReference type="PROSITE" id="PS50823">
    <property type="entry name" value="KH_TYPE_2"/>
    <property type="match status" value="1"/>
</dbReference>
<dbReference type="PROSITE" id="PS00548">
    <property type="entry name" value="RIBOSOMAL_S3"/>
    <property type="match status" value="1"/>
</dbReference>
<organism>
    <name type="scientific">Novosphingobium aromaticivorans (strain ATCC 700278 / DSM 12444 / CCUG 56034 / CIP 105152 / NBRC 16084 / F199)</name>
    <dbReference type="NCBI Taxonomy" id="279238"/>
    <lineage>
        <taxon>Bacteria</taxon>
        <taxon>Pseudomonadati</taxon>
        <taxon>Pseudomonadota</taxon>
        <taxon>Alphaproteobacteria</taxon>
        <taxon>Sphingomonadales</taxon>
        <taxon>Sphingomonadaceae</taxon>
        <taxon>Novosphingobium</taxon>
    </lineage>
</organism>
<proteinExistence type="inferred from homology"/>
<reference key="1">
    <citation type="submission" date="2006-01" db="EMBL/GenBank/DDBJ databases">
        <title>Complete sequence of Novosphingobium aromaticivorans DSM 12444.</title>
        <authorList>
            <consortium name="US DOE Joint Genome Institute"/>
            <person name="Copeland A."/>
            <person name="Lucas S."/>
            <person name="Lapidus A."/>
            <person name="Barry K."/>
            <person name="Detter J.C."/>
            <person name="Glavina T."/>
            <person name="Hammon N."/>
            <person name="Israni S."/>
            <person name="Pitluck S."/>
            <person name="Chain P."/>
            <person name="Malfatti S."/>
            <person name="Shin M."/>
            <person name="Vergez L."/>
            <person name="Schmutz J."/>
            <person name="Larimer F."/>
            <person name="Land M."/>
            <person name="Kyrpides N."/>
            <person name="Ivanova N."/>
            <person name="Fredrickson J."/>
            <person name="Balkwill D."/>
            <person name="Romine M.F."/>
            <person name="Richardson P."/>
        </authorList>
    </citation>
    <scope>NUCLEOTIDE SEQUENCE [LARGE SCALE GENOMIC DNA]</scope>
    <source>
        <strain>ATCC 700278 / DSM 12444 / CCUG 56034 / CIP 105152 / NBRC 16084 / F199</strain>
    </source>
</reference>
<comment type="function">
    <text evidence="1">Binds the lower part of the 30S subunit head. Binds mRNA in the 70S ribosome, positioning it for translation.</text>
</comment>
<comment type="subunit">
    <text evidence="1">Part of the 30S ribosomal subunit. Forms a tight complex with proteins S10 and S14.</text>
</comment>
<comment type="similarity">
    <text evidence="1">Belongs to the universal ribosomal protein uS3 family.</text>
</comment>
<gene>
    <name evidence="1" type="primary">rpsC</name>
    <name type="ordered locus">Saro_1255</name>
</gene>
<protein>
    <recommendedName>
        <fullName evidence="1">Small ribosomal subunit protein uS3</fullName>
    </recommendedName>
    <alternativeName>
        <fullName evidence="2">30S ribosomal protein S3</fullName>
    </alternativeName>
</protein>
<keyword id="KW-1185">Reference proteome</keyword>
<keyword id="KW-0687">Ribonucleoprotein</keyword>
<keyword id="KW-0689">Ribosomal protein</keyword>
<keyword id="KW-0694">RNA-binding</keyword>
<keyword id="KW-0699">rRNA-binding</keyword>
<name>RS3_NOVAD</name>
<feature type="chain" id="PRO_0000293843" description="Small ribosomal subunit protein uS3">
    <location>
        <begin position="1"/>
        <end position="231"/>
    </location>
</feature>
<feature type="domain" description="KH type-2" evidence="1">
    <location>
        <begin position="39"/>
        <end position="107"/>
    </location>
</feature>